<keyword id="KW-0963">Cytoplasm</keyword>
<keyword id="KW-0206">Cytoskeleton</keyword>
<keyword id="KW-0342">GTP-binding</keyword>
<keyword id="KW-0460">Magnesium</keyword>
<keyword id="KW-0479">Metal-binding</keyword>
<keyword id="KW-0493">Microtubule</keyword>
<keyword id="KW-0547">Nucleotide-binding</keyword>
<dbReference type="EMBL" id="Z67993">
    <property type="protein sequence ID" value="CAA91941.1"/>
    <property type="molecule type" value="Genomic_DNA"/>
</dbReference>
<dbReference type="SMR" id="P50261"/>
<dbReference type="GO" id="GO:0005737">
    <property type="term" value="C:cytoplasm"/>
    <property type="evidence" value="ECO:0007669"/>
    <property type="project" value="UniProtKB-KW"/>
</dbReference>
<dbReference type="GO" id="GO:0005874">
    <property type="term" value="C:microtubule"/>
    <property type="evidence" value="ECO:0007669"/>
    <property type="project" value="UniProtKB-KW"/>
</dbReference>
<dbReference type="GO" id="GO:0005525">
    <property type="term" value="F:GTP binding"/>
    <property type="evidence" value="ECO:0007669"/>
    <property type="project" value="UniProtKB-KW"/>
</dbReference>
<dbReference type="GO" id="GO:0003924">
    <property type="term" value="F:GTPase activity"/>
    <property type="evidence" value="ECO:0007669"/>
    <property type="project" value="InterPro"/>
</dbReference>
<dbReference type="GO" id="GO:0046872">
    <property type="term" value="F:metal ion binding"/>
    <property type="evidence" value="ECO:0007669"/>
    <property type="project" value="UniProtKB-KW"/>
</dbReference>
<dbReference type="GO" id="GO:0005200">
    <property type="term" value="F:structural constituent of cytoskeleton"/>
    <property type="evidence" value="ECO:0007669"/>
    <property type="project" value="InterPro"/>
</dbReference>
<dbReference type="GO" id="GO:0007017">
    <property type="term" value="P:microtubule-based process"/>
    <property type="evidence" value="ECO:0007669"/>
    <property type="project" value="InterPro"/>
</dbReference>
<dbReference type="CDD" id="cd02187">
    <property type="entry name" value="beta_tubulin"/>
    <property type="match status" value="1"/>
</dbReference>
<dbReference type="FunFam" id="1.10.287.600:FF:000002">
    <property type="entry name" value="Tubulin beta chain"/>
    <property type="match status" value="1"/>
</dbReference>
<dbReference type="FunFam" id="3.30.1330.20:FF:000002">
    <property type="entry name" value="Tubulin beta chain"/>
    <property type="match status" value="1"/>
</dbReference>
<dbReference type="FunFam" id="3.40.50.1440:FF:000003">
    <property type="entry name" value="Tubulin beta chain"/>
    <property type="match status" value="1"/>
</dbReference>
<dbReference type="Gene3D" id="1.10.287.600">
    <property type="entry name" value="Helix hairpin bin"/>
    <property type="match status" value="1"/>
</dbReference>
<dbReference type="Gene3D" id="3.30.1330.20">
    <property type="entry name" value="Tubulin/FtsZ, C-terminal domain"/>
    <property type="match status" value="1"/>
</dbReference>
<dbReference type="Gene3D" id="3.40.50.1440">
    <property type="entry name" value="Tubulin/FtsZ, GTPase domain"/>
    <property type="match status" value="1"/>
</dbReference>
<dbReference type="InterPro" id="IPR013838">
    <property type="entry name" value="Beta-tubulin_BS"/>
</dbReference>
<dbReference type="InterPro" id="IPR002453">
    <property type="entry name" value="Beta_tubulin"/>
</dbReference>
<dbReference type="InterPro" id="IPR008280">
    <property type="entry name" value="Tub_FtsZ_C"/>
</dbReference>
<dbReference type="InterPro" id="IPR000217">
    <property type="entry name" value="Tubulin"/>
</dbReference>
<dbReference type="InterPro" id="IPR037103">
    <property type="entry name" value="Tubulin/FtsZ-like_C"/>
</dbReference>
<dbReference type="InterPro" id="IPR018316">
    <property type="entry name" value="Tubulin/FtsZ_2-layer-sand-dom"/>
</dbReference>
<dbReference type="InterPro" id="IPR036525">
    <property type="entry name" value="Tubulin/FtsZ_GTPase_sf"/>
</dbReference>
<dbReference type="InterPro" id="IPR023123">
    <property type="entry name" value="Tubulin_C"/>
</dbReference>
<dbReference type="InterPro" id="IPR017975">
    <property type="entry name" value="Tubulin_CS"/>
</dbReference>
<dbReference type="InterPro" id="IPR003008">
    <property type="entry name" value="Tubulin_FtsZ_GTPase"/>
</dbReference>
<dbReference type="PANTHER" id="PTHR11588">
    <property type="entry name" value="TUBULIN"/>
    <property type="match status" value="1"/>
</dbReference>
<dbReference type="Pfam" id="PF00091">
    <property type="entry name" value="Tubulin"/>
    <property type="match status" value="1"/>
</dbReference>
<dbReference type="Pfam" id="PF03953">
    <property type="entry name" value="Tubulin_C"/>
    <property type="match status" value="1"/>
</dbReference>
<dbReference type="PRINTS" id="PR01163">
    <property type="entry name" value="BETATUBULIN"/>
</dbReference>
<dbReference type="PRINTS" id="PR01161">
    <property type="entry name" value="TUBULIN"/>
</dbReference>
<dbReference type="SMART" id="SM00864">
    <property type="entry name" value="Tubulin"/>
    <property type="match status" value="1"/>
</dbReference>
<dbReference type="SMART" id="SM00865">
    <property type="entry name" value="Tubulin_C"/>
    <property type="match status" value="1"/>
</dbReference>
<dbReference type="SUPFAM" id="SSF55307">
    <property type="entry name" value="Tubulin C-terminal domain-like"/>
    <property type="match status" value="1"/>
</dbReference>
<dbReference type="SUPFAM" id="SSF52490">
    <property type="entry name" value="Tubulin nucleotide-binding domain-like"/>
    <property type="match status" value="1"/>
</dbReference>
<dbReference type="PROSITE" id="PS00227">
    <property type="entry name" value="TUBULIN"/>
    <property type="match status" value="1"/>
</dbReference>
<dbReference type="PROSITE" id="PS00228">
    <property type="entry name" value="TUBULIN_B_AUTOREG"/>
    <property type="match status" value="1"/>
</dbReference>
<feature type="chain" id="PRO_0000048377" description="Tubulin beta-3 chain">
    <location>
        <begin position="1"/>
        <end position="445"/>
    </location>
</feature>
<feature type="region of interest" description="Disordered" evidence="3">
    <location>
        <begin position="417"/>
        <end position="445"/>
    </location>
</feature>
<feature type="compositionally biased region" description="Polar residues" evidence="3">
    <location>
        <begin position="417"/>
        <end position="426"/>
    </location>
</feature>
<feature type="compositionally biased region" description="Acidic residues" evidence="3">
    <location>
        <begin position="429"/>
        <end position="445"/>
    </location>
</feature>
<feature type="binding site" evidence="2">
    <location>
        <position position="11"/>
    </location>
    <ligand>
        <name>GTP</name>
        <dbReference type="ChEBI" id="CHEBI:37565"/>
    </ligand>
</feature>
<feature type="binding site" evidence="1">
    <location>
        <position position="69"/>
    </location>
    <ligand>
        <name>GTP</name>
        <dbReference type="ChEBI" id="CHEBI:37565"/>
    </ligand>
</feature>
<feature type="binding site" evidence="1">
    <location>
        <position position="69"/>
    </location>
    <ligand>
        <name>Mg(2+)</name>
        <dbReference type="ChEBI" id="CHEBI:18420"/>
    </ligand>
</feature>
<feature type="binding site" evidence="2">
    <location>
        <position position="138"/>
    </location>
    <ligand>
        <name>GTP</name>
        <dbReference type="ChEBI" id="CHEBI:37565"/>
    </ligand>
</feature>
<feature type="binding site" evidence="2">
    <location>
        <position position="142"/>
    </location>
    <ligand>
        <name>GTP</name>
        <dbReference type="ChEBI" id="CHEBI:37565"/>
    </ligand>
</feature>
<feature type="binding site" evidence="2">
    <location>
        <position position="143"/>
    </location>
    <ligand>
        <name>GTP</name>
        <dbReference type="ChEBI" id="CHEBI:37565"/>
    </ligand>
</feature>
<feature type="binding site" evidence="2">
    <location>
        <position position="144"/>
    </location>
    <ligand>
        <name>GTP</name>
        <dbReference type="ChEBI" id="CHEBI:37565"/>
    </ligand>
</feature>
<feature type="binding site" evidence="2">
    <location>
        <position position="204"/>
    </location>
    <ligand>
        <name>GTP</name>
        <dbReference type="ChEBI" id="CHEBI:37565"/>
    </ligand>
</feature>
<feature type="binding site" evidence="2">
    <location>
        <position position="226"/>
    </location>
    <ligand>
        <name>GTP</name>
        <dbReference type="ChEBI" id="CHEBI:37565"/>
    </ligand>
</feature>
<accession>P50261</accession>
<sequence>MREIVHIQAGQCGNQIGAKFWQVISDEHGVDPTGTYKGDSDLQLERINVYYNEATGGRYVPRAVLIDLEPGTMDAVRAGPFGQLFRPDNFVFGQTGAGNNWAKGHYTEGAELIDSVLDVVRNEAESCDCLQGFQMTHSLGGGTGSGMGTLLIAKLREEYPDRVMMTFSVCPSPKVSDTVVEPYNATLSVHQIVENTDESFVLDNEALYDICFRTLKLTTPTYGDLNHLVCVCMSGVTSSLRFPGQLNCDLRKVAVNLIPFPRLHFFMVGFAPLTSRGSQQYRALTVPELTQQCFDAKNMMCAADPRHGRFLTASCMFRGRMSTKEVDEQMLNVQTKNSSYFVEWIPNNIKASVCDIPPKGLKMSSTFVGNSTAIQEMFKRVGEQFTAMYKRKAFLHWYTGEGMDDMEFTEAESNMNDLVSEYQQYQEASADDEADEFDEEEGDEE</sequence>
<gene>
    <name type="primary">TUBB3</name>
</gene>
<name>TBB3_OOMCK</name>
<reference key="1">
    <citation type="submission" date="1995-11" db="EMBL/GenBank/DDBJ databases">
        <title>Expression of beta-tubulin genes in the sporophyte and gametophyte of the red alga Porphyra purpurea.</title>
        <authorList>
            <person name="Mackay R.M."/>
            <person name="Gallant J.W."/>
        </authorList>
    </citation>
    <scope>NUCLEOTIDE SEQUENCE [GENOMIC DNA]</scope>
</reference>
<reference key="2">
    <citation type="journal article" date="1998" name="J. Eukaryot. Microbiol.">
        <title>The phylogenetic position of alpha- and beta-tubulins from the Chlorarachnion host and Cercomonas (Cercozoa).</title>
        <authorList>
            <person name="Keeling P.J."/>
            <person name="Deane J.A."/>
            <person name="McFadden G.I."/>
        </authorList>
    </citation>
    <scope>REVISES SPECIES OF ORIGIN</scope>
</reference>
<proteinExistence type="inferred from homology"/>
<protein>
    <recommendedName>
        <fullName>Tubulin beta-3 chain</fullName>
    </recommendedName>
    <alternativeName>
        <fullName>Beta-3-tubulin</fullName>
    </alternativeName>
</protein>
<comment type="function">
    <text>Tubulin is the major constituent of microtubules, a cylinder consisting of laterally associated linear protofilaments composed of alpha- and beta-tubulin heterodimers. Microtubules grow by the addition of GTP-tubulin dimers to the microtubule end, where a stabilizing cap forms. Below the cap, tubulin dimers are in GDP-bound state, owing to GTPase activity of alpha-tubulin.</text>
</comment>
<comment type="cofactor">
    <cofactor evidence="1">
        <name>Mg(2+)</name>
        <dbReference type="ChEBI" id="CHEBI:18420"/>
    </cofactor>
</comment>
<comment type="subunit">
    <text>Dimer of alpha and beta chains. A typical microtubule is a hollow water-filled tube with an outer diameter of 25 nm and an inner diameter of 15 nM. Alpha-beta heterodimers associate head-to-tail to form protofilaments running lengthwise along the microtubule wall with the beta-tubulin subunit facing the microtubule plus end conferring a structural polarity. Microtubules usually have 13 protofilaments but different protofilament numbers can be found in some organisms and specialized cells.</text>
</comment>
<comment type="subcellular location">
    <subcellularLocation>
        <location>Cytoplasm</location>
        <location>Cytoskeleton</location>
    </subcellularLocation>
</comment>
<comment type="similarity">
    <text evidence="4">Belongs to the tubulin family.</text>
</comment>
<comment type="caution">
    <text evidence="4">Was originally (Ref.1) thought to originate from Porphyra purpurea.</text>
</comment>
<organism>
    <name type="scientific">Oomycete-like sp. (strain MacKay2000)</name>
    <dbReference type="NCBI Taxonomy" id="129195"/>
    <lineage>
        <taxon>Eukaryota</taxon>
        <taxon>Sar</taxon>
        <taxon>Stramenopiles</taxon>
    </lineage>
</organism>
<evidence type="ECO:0000250" key="1">
    <source>
        <dbReference type="UniProtKB" id="P68363"/>
    </source>
</evidence>
<evidence type="ECO:0000250" key="2">
    <source>
        <dbReference type="UniProtKB" id="Q13509"/>
    </source>
</evidence>
<evidence type="ECO:0000256" key="3">
    <source>
        <dbReference type="SAM" id="MobiDB-lite"/>
    </source>
</evidence>
<evidence type="ECO:0000305" key="4"/>